<name>RL18_VIBVU</name>
<dbReference type="EMBL" id="AE016795">
    <property type="protein sequence ID" value="AAO09253.1"/>
    <property type="molecule type" value="Genomic_DNA"/>
</dbReference>
<dbReference type="RefSeq" id="WP_011078817.1">
    <property type="nucleotide sequence ID" value="NC_004459.3"/>
</dbReference>
<dbReference type="SMR" id="Q8DE56"/>
<dbReference type="GeneID" id="93895050"/>
<dbReference type="KEGG" id="vvu:VV1_0744"/>
<dbReference type="HOGENOM" id="CLU_098841_0_1_6"/>
<dbReference type="Proteomes" id="UP000002275">
    <property type="component" value="Chromosome 1"/>
</dbReference>
<dbReference type="GO" id="GO:0022625">
    <property type="term" value="C:cytosolic large ribosomal subunit"/>
    <property type="evidence" value="ECO:0007669"/>
    <property type="project" value="TreeGrafter"/>
</dbReference>
<dbReference type="GO" id="GO:0008097">
    <property type="term" value="F:5S rRNA binding"/>
    <property type="evidence" value="ECO:0007669"/>
    <property type="project" value="TreeGrafter"/>
</dbReference>
<dbReference type="GO" id="GO:0003735">
    <property type="term" value="F:structural constituent of ribosome"/>
    <property type="evidence" value="ECO:0007669"/>
    <property type="project" value="InterPro"/>
</dbReference>
<dbReference type="GO" id="GO:0006412">
    <property type="term" value="P:translation"/>
    <property type="evidence" value="ECO:0007669"/>
    <property type="project" value="UniProtKB-UniRule"/>
</dbReference>
<dbReference type="CDD" id="cd00432">
    <property type="entry name" value="Ribosomal_L18_L5e"/>
    <property type="match status" value="1"/>
</dbReference>
<dbReference type="FunFam" id="3.30.420.100:FF:000001">
    <property type="entry name" value="50S ribosomal protein L18"/>
    <property type="match status" value="1"/>
</dbReference>
<dbReference type="Gene3D" id="3.30.420.100">
    <property type="match status" value="1"/>
</dbReference>
<dbReference type="HAMAP" id="MF_01337_B">
    <property type="entry name" value="Ribosomal_uL18_B"/>
    <property type="match status" value="1"/>
</dbReference>
<dbReference type="InterPro" id="IPR004389">
    <property type="entry name" value="Ribosomal_uL18_bac-type"/>
</dbReference>
<dbReference type="InterPro" id="IPR005484">
    <property type="entry name" value="Ribosomal_uL18_bac/euk"/>
</dbReference>
<dbReference type="NCBIfam" id="TIGR00060">
    <property type="entry name" value="L18_bact"/>
    <property type="match status" value="1"/>
</dbReference>
<dbReference type="PANTHER" id="PTHR12899">
    <property type="entry name" value="39S RIBOSOMAL PROTEIN L18, MITOCHONDRIAL"/>
    <property type="match status" value="1"/>
</dbReference>
<dbReference type="PANTHER" id="PTHR12899:SF3">
    <property type="entry name" value="LARGE RIBOSOMAL SUBUNIT PROTEIN UL18M"/>
    <property type="match status" value="1"/>
</dbReference>
<dbReference type="Pfam" id="PF00861">
    <property type="entry name" value="Ribosomal_L18p"/>
    <property type="match status" value="1"/>
</dbReference>
<dbReference type="SUPFAM" id="SSF53137">
    <property type="entry name" value="Translational machinery components"/>
    <property type="match status" value="1"/>
</dbReference>
<gene>
    <name evidence="1" type="primary">rplR</name>
    <name type="ordered locus">VV1_0744</name>
</gene>
<accession>Q8DE56</accession>
<sequence length="117" mass="12646">MDKKASRIRRATRARRKIAELGATRLVVHRTPRHVYAQVIAANGSEVIAAASTVEKAIREQVKYTGNIEAAKAVGKAVAERALEKGVSTVAFDRSGFQYHGRVAALADSAREAGLKF</sequence>
<protein>
    <recommendedName>
        <fullName evidence="1">Large ribosomal subunit protein uL18</fullName>
    </recommendedName>
    <alternativeName>
        <fullName evidence="2">50S ribosomal protein L18</fullName>
    </alternativeName>
</protein>
<feature type="chain" id="PRO_0000131384" description="Large ribosomal subunit protein uL18">
    <location>
        <begin position="1"/>
        <end position="117"/>
    </location>
</feature>
<comment type="function">
    <text evidence="1">This is one of the proteins that bind and probably mediate the attachment of the 5S RNA into the large ribosomal subunit, where it forms part of the central protuberance.</text>
</comment>
<comment type="subunit">
    <text evidence="1">Part of the 50S ribosomal subunit; part of the 5S rRNA/L5/L18/L25 subcomplex. Contacts the 5S and 23S rRNAs.</text>
</comment>
<comment type="similarity">
    <text evidence="1">Belongs to the universal ribosomal protein uL18 family.</text>
</comment>
<proteinExistence type="inferred from homology"/>
<reference key="1">
    <citation type="submission" date="2002-12" db="EMBL/GenBank/DDBJ databases">
        <title>Complete genome sequence of Vibrio vulnificus CMCP6.</title>
        <authorList>
            <person name="Rhee J.H."/>
            <person name="Kim S.Y."/>
            <person name="Chung S.S."/>
            <person name="Kim J.J."/>
            <person name="Moon Y.H."/>
            <person name="Jeong H."/>
            <person name="Choy H.E."/>
        </authorList>
    </citation>
    <scope>NUCLEOTIDE SEQUENCE [LARGE SCALE GENOMIC DNA]</scope>
    <source>
        <strain>CMCP6</strain>
    </source>
</reference>
<organism>
    <name type="scientific">Vibrio vulnificus (strain CMCP6)</name>
    <dbReference type="NCBI Taxonomy" id="216895"/>
    <lineage>
        <taxon>Bacteria</taxon>
        <taxon>Pseudomonadati</taxon>
        <taxon>Pseudomonadota</taxon>
        <taxon>Gammaproteobacteria</taxon>
        <taxon>Vibrionales</taxon>
        <taxon>Vibrionaceae</taxon>
        <taxon>Vibrio</taxon>
    </lineage>
</organism>
<keyword id="KW-0687">Ribonucleoprotein</keyword>
<keyword id="KW-0689">Ribosomal protein</keyword>
<keyword id="KW-0694">RNA-binding</keyword>
<keyword id="KW-0699">rRNA-binding</keyword>
<evidence type="ECO:0000255" key="1">
    <source>
        <dbReference type="HAMAP-Rule" id="MF_01337"/>
    </source>
</evidence>
<evidence type="ECO:0000305" key="2"/>